<proteinExistence type="evidence at protein level"/>
<accession>P01225</accession>
<accession>A2TF08</accession>
<accession>A5JVV3</accession>
<accession>Q14D61</accession>
<organism>
    <name type="scientific">Homo sapiens</name>
    <name type="common">Human</name>
    <dbReference type="NCBI Taxonomy" id="9606"/>
    <lineage>
        <taxon>Eukaryota</taxon>
        <taxon>Metazoa</taxon>
        <taxon>Chordata</taxon>
        <taxon>Craniata</taxon>
        <taxon>Vertebrata</taxon>
        <taxon>Euteleostomi</taxon>
        <taxon>Mammalia</taxon>
        <taxon>Eutheria</taxon>
        <taxon>Euarchontoglires</taxon>
        <taxon>Primates</taxon>
        <taxon>Haplorrhini</taxon>
        <taxon>Catarrhini</taxon>
        <taxon>Hominidae</taxon>
        <taxon>Homo</taxon>
    </lineage>
</organism>
<keyword id="KW-0002">3D-structure</keyword>
<keyword id="KW-0903">Direct protein sequencing</keyword>
<keyword id="KW-0225">Disease variant</keyword>
<keyword id="KW-1015">Disulfide bond</keyword>
<keyword id="KW-0325">Glycoprotein</keyword>
<keyword id="KW-0372">Hormone</keyword>
<keyword id="KW-1016">Hypogonadotropic hypogonadism</keyword>
<keyword id="KW-0582">Pharmaceutical</keyword>
<keyword id="KW-1267">Proteomics identification</keyword>
<keyword id="KW-1185">Reference proteome</keyword>
<keyword id="KW-0964">Secreted</keyword>
<keyword id="KW-0732">Signal</keyword>
<feature type="signal peptide" evidence="5">
    <location>
        <begin position="1"/>
        <end position="18"/>
    </location>
</feature>
<feature type="chain" id="PRO_0000011711" description="Follitropin subunit beta">
    <location>
        <begin position="19"/>
        <end position="129"/>
    </location>
</feature>
<feature type="glycosylation site" description="N-linked (GlcNAc...) asparagine" evidence="2 7 12">
    <location>
        <position position="25"/>
    </location>
</feature>
<feature type="glycosylation site" description="N-linked (GlcNAc...) asparagine" evidence="2 7 12">
    <location>
        <position position="42"/>
    </location>
</feature>
<feature type="disulfide bond" evidence="3 12">
    <location>
        <begin position="21"/>
        <end position="69"/>
    </location>
</feature>
<feature type="disulfide bond" evidence="3 12">
    <location>
        <begin position="35"/>
        <end position="84"/>
    </location>
</feature>
<feature type="disulfide bond" evidence="3 12">
    <location>
        <begin position="38"/>
        <end position="122"/>
    </location>
</feature>
<feature type="disulfide bond" evidence="3 12">
    <location>
        <begin position="46"/>
        <end position="100"/>
    </location>
</feature>
<feature type="disulfide bond" evidence="3 12">
    <location>
        <begin position="50"/>
        <end position="102"/>
    </location>
</feature>
<feature type="disulfide bond" evidence="3 12">
    <location>
        <begin position="105"/>
        <end position="112"/>
    </location>
</feature>
<feature type="sequence variant" id="VAR_012047" description="In dbSNP:rs6170." evidence="1">
    <original>S</original>
    <variation>I</variation>
    <location>
        <position position="20"/>
    </location>
</feature>
<feature type="sequence variant" id="VAR_033015" description="In HH24; dbSNP:rs5030776." evidence="9">
    <original>C</original>
    <variation>G</variation>
    <location>
        <position position="69"/>
    </location>
</feature>
<feature type="mutagenesis site" description="Increased activation of the follicle-stimulating hormone signaling pathway." evidence="3">
    <original>T</original>
    <variation>E</variation>
    <location>
        <position position="78"/>
    </location>
</feature>
<feature type="strand" evidence="13">
    <location>
        <begin position="21"/>
        <end position="32"/>
    </location>
</feature>
<feature type="helix" evidence="13">
    <location>
        <begin position="33"/>
        <end position="35"/>
    </location>
</feature>
<feature type="strand" evidence="13">
    <location>
        <begin position="37"/>
        <end position="53"/>
    </location>
</feature>
<feature type="strand" evidence="13">
    <location>
        <begin position="68"/>
        <end position="81"/>
    </location>
</feature>
<feature type="strand" evidence="14">
    <location>
        <begin position="85"/>
        <end position="87"/>
    </location>
</feature>
<feature type="strand" evidence="13">
    <location>
        <begin position="90"/>
        <end position="103"/>
    </location>
</feature>
<feature type="turn" evidence="13">
    <location>
        <begin position="107"/>
        <end position="109"/>
    </location>
</feature>
<feature type="strand" evidence="13">
    <location>
        <begin position="110"/>
        <end position="114"/>
    </location>
</feature>
<reference key="1">
    <citation type="journal article" date="1987" name="DNA">
        <title>DNA sequence and regional assignment of the human follicle-stimulating hormone beta-subunit gene to the short arm of human chromosome 11.</title>
        <authorList>
            <person name="Watkins P.C."/>
            <person name="Eddy R."/>
            <person name="Beck A.K."/>
            <person name="Vellucci V."/>
            <person name="Leverone B."/>
            <person name="Tanzi R.E."/>
            <person name="Gusella J.F."/>
            <person name="Shows T.B."/>
        </authorList>
    </citation>
    <scope>NUCLEOTIDE SEQUENCE [GENOMIC DNA]</scope>
</reference>
<reference key="2">
    <citation type="journal article" date="1989" name="J. Biol. Chem.">
        <title>Expression of biologically active human follitropin in Chinese hamster ovary cells.</title>
        <authorList>
            <person name="Keene J.L."/>
            <person name="Matzuk M.M."/>
            <person name="Otani T."/>
            <person name="Fauser B.C.J.M."/>
            <person name="Galway A.B."/>
            <person name="Hsueh A.J.W."/>
            <person name="Boime I."/>
        </authorList>
    </citation>
    <scope>NUCLEOTIDE SEQUENCE [GENOMIC DNA]</scope>
    <scope>FUNCTION</scope>
    <scope>SUBCELLULAR LOCATION</scope>
    <scope>SUBUNIT</scope>
</reference>
<reference key="3">
    <citation type="journal article" date="1988" name="Mol. Endocrinol.">
        <title>Human follicle-stimulating hormone beta-subunit gene encodes multiple messenger ribonucleic acids.</title>
        <authorList>
            <person name="Jameson J.L."/>
            <person name="Becker C.B."/>
            <person name="Lindell C.M."/>
            <person name="Habener J.F."/>
        </authorList>
    </citation>
    <scope>NUCLEOTIDE SEQUENCE [GENOMIC DNA]</scope>
</reference>
<reference key="4">
    <citation type="submission" date="2007-08" db="EMBL/GenBank/DDBJ databases">
        <title>Follicle-stimulating hormone (FSHB) beta subunit genes.</title>
        <authorList>
            <person name="Akbari Eidgahi M.R."/>
            <person name="Shaebani A.A."/>
            <person name="Nasr R."/>
        </authorList>
    </citation>
    <scope>NUCLEOTIDE SEQUENCE [GENOMIC DNA]</scope>
</reference>
<reference key="5">
    <citation type="journal article" date="2006" name="Nature">
        <title>Human chromosome 11 DNA sequence and analysis including novel gene identification.</title>
        <authorList>
            <person name="Taylor T.D."/>
            <person name="Noguchi H."/>
            <person name="Totoki Y."/>
            <person name="Toyoda A."/>
            <person name="Kuroki Y."/>
            <person name="Dewar K."/>
            <person name="Lloyd C."/>
            <person name="Itoh T."/>
            <person name="Takeda T."/>
            <person name="Kim D.-W."/>
            <person name="She X."/>
            <person name="Barlow K.F."/>
            <person name="Bloom T."/>
            <person name="Bruford E."/>
            <person name="Chang J.L."/>
            <person name="Cuomo C.A."/>
            <person name="Eichler E."/>
            <person name="FitzGerald M.G."/>
            <person name="Jaffe D.B."/>
            <person name="LaButti K."/>
            <person name="Nicol R."/>
            <person name="Park H.-S."/>
            <person name="Seaman C."/>
            <person name="Sougnez C."/>
            <person name="Yang X."/>
            <person name="Zimmer A.R."/>
            <person name="Zody M.C."/>
            <person name="Birren B.W."/>
            <person name="Nusbaum C."/>
            <person name="Fujiyama A."/>
            <person name="Hattori M."/>
            <person name="Rogers J."/>
            <person name="Lander E.S."/>
            <person name="Sakaki Y."/>
        </authorList>
    </citation>
    <scope>NUCLEOTIDE SEQUENCE [LARGE SCALE GENOMIC DNA]</scope>
</reference>
<reference key="6">
    <citation type="submission" date="2005-09" db="EMBL/GenBank/DDBJ databases">
        <authorList>
            <person name="Mural R.J."/>
            <person name="Istrail S."/>
            <person name="Sutton G.G."/>
            <person name="Florea L."/>
            <person name="Halpern A.L."/>
            <person name="Mobarry C.M."/>
            <person name="Lippert R."/>
            <person name="Walenz B."/>
            <person name="Shatkay H."/>
            <person name="Dew I."/>
            <person name="Miller J.R."/>
            <person name="Flanigan M.J."/>
            <person name="Edwards N.J."/>
            <person name="Bolanos R."/>
            <person name="Fasulo D."/>
            <person name="Halldorsson B.V."/>
            <person name="Hannenhalli S."/>
            <person name="Turner R."/>
            <person name="Yooseph S."/>
            <person name="Lu F."/>
            <person name="Nusskern D.R."/>
            <person name="Shue B.C."/>
            <person name="Zheng X.H."/>
            <person name="Zhong F."/>
            <person name="Delcher A.L."/>
            <person name="Huson D.H."/>
            <person name="Kravitz S.A."/>
            <person name="Mouchard L."/>
            <person name="Reinert K."/>
            <person name="Remington K.A."/>
            <person name="Clark A.G."/>
            <person name="Waterman M.S."/>
            <person name="Eichler E.E."/>
            <person name="Adams M.D."/>
            <person name="Hunkapiller M.W."/>
            <person name="Myers E.W."/>
            <person name="Venter J.C."/>
        </authorList>
    </citation>
    <scope>NUCLEOTIDE SEQUENCE [LARGE SCALE GENOMIC DNA]</scope>
</reference>
<reference key="7">
    <citation type="journal article" date="2004" name="Genome Res.">
        <title>The status, quality, and expansion of the NIH full-length cDNA project: the Mammalian Gene Collection (MGC).</title>
        <authorList>
            <consortium name="The MGC Project Team"/>
        </authorList>
    </citation>
    <scope>NUCLEOTIDE SEQUENCE [LARGE SCALE MRNA]</scope>
</reference>
<reference key="8">
    <citation type="journal article" date="1988" name="J. Protein Chem.">
        <title>A reevaluation of the amino acid sequence of human follitropin beta-subunit.</title>
        <authorList>
            <person name="Shome B."/>
            <person name="Parlow A.F."/>
            <person name="Liu W.K."/>
            <person name="Nahm H.S."/>
            <person name="Wen T."/>
            <person name="Ward D.N."/>
        </authorList>
    </citation>
    <scope>PROTEIN SEQUENCE OF 19-129</scope>
</reference>
<reference key="9">
    <citation type="journal article" date="1976" name="J. Biol. Chem.">
        <title>Amino acid sequence of the beta subunit of follicle-stimulating hormone from human pituitary glands.</title>
        <authorList>
            <person name="Saxena B.B."/>
            <person name="Rathnam P."/>
        </authorList>
    </citation>
    <scope>PRELIMINARY PROTEIN SEQUENCE OF 19-129</scope>
</reference>
<reference key="10">
    <citation type="journal article" date="1974" name="J. Clin. Endocrinol. Metab.">
        <title>Human follicle stimulating hormone: first proposal for the amino acid sequence of the hormone-specific, beta subunit (hFSHb).</title>
        <authorList>
            <person name="Shome B."/>
            <person name="Parlow A.F."/>
        </authorList>
    </citation>
    <scope>PRELIMINARY PROTEIN SEQUENCE OF 19-129</scope>
</reference>
<reference key="11">
    <citation type="journal article" date="1977" name="Fertil. Steril.">
        <title>Isolated follicle-stimulating hormone deficiency in man.</title>
        <authorList>
            <person name="Maroulis G.B."/>
            <person name="Parlow A.F."/>
            <person name="Marshall J.R."/>
        </authorList>
    </citation>
    <scope>FUNCTION</scope>
</reference>
<reference key="12">
    <citation type="journal article" date="1980" name="Biochim. Biophys. Acta">
        <title>Studies on the disulfide bonds in human pituitary follicle-stimulating hormone.</title>
        <authorList>
            <person name="Fujiki Y."/>
            <person name="Rathnam P."/>
            <person name="Saxena B.B."/>
        </authorList>
    </citation>
    <scope>PRELIMINARY ASSIGNMENT OF DISULFIDE BONDS</scope>
</reference>
<reference key="13">
    <citation type="journal article" date="2001" name="Biol. Chem.">
        <title>Assignment of the complete disulphide bridge pattern in the human recombinant follitropin beta-chain.</title>
        <authorList>
            <person name="Amoresano A."/>
            <person name="Orru S."/>
            <person name="Siciliano R.A."/>
            <person name="De Luca E."/>
            <person name="Napoleoni R."/>
            <person name="Sirna A."/>
            <person name="Pucci P."/>
        </authorList>
    </citation>
    <scope>DISULFIDE BONDS</scope>
</reference>
<reference key="14">
    <citation type="journal article" date="2001" name="Mol. Endocrinol.">
        <title>Three-dimensional structure of human follicle-stimulating hormone.</title>
        <authorList>
            <person name="Fox K.M."/>
            <person name="Dias J.A."/>
            <person name="Van Roey P."/>
        </authorList>
    </citation>
    <scope>X-RAY CRYSTALLOGRAPHY (3.0 ANGSTROMS) OF MUTANT ALA-27</scope>
</reference>
<reference key="15">
    <citation type="journal article" date="2005" name="Nature">
        <title>Structure of human follicle-stimulating hormone in complex with its receptor.</title>
        <authorList>
            <person name="Fan Q.R."/>
            <person name="Hendrickson W.A."/>
        </authorList>
    </citation>
    <scope>X-RAY CRYSTALLOGRAPHY (2.92 ANGSTROMS) OF 19-129 IN COMPLEX WITH CGA AND FSHR</scope>
    <scope>DISULFIDE BONDS</scope>
    <scope>GLYCOSYLATION AT ASN-25 AND ASN-42</scope>
</reference>
<reference evidence="12" key="16">
    <citation type="journal article" date="2014" name="J. Biol. Chem.">
        <title>Evidence for follicle-stimulating hormone receptor as a functional trimer.</title>
        <authorList>
            <person name="Jiang X."/>
            <person name="Fischer D."/>
            <person name="Chen X."/>
            <person name="McKenna S.D."/>
            <person name="Liu H."/>
            <person name="Sriraman V."/>
            <person name="Yu H.N."/>
            <person name="Goutopoulos A."/>
            <person name="Arkinstall S."/>
            <person name="He X."/>
        </authorList>
    </citation>
    <scope>X-RAY CRYSTALLOGRAPHY (2.90 ANGSTROMS) OF 19-129 IN COMPLEX WITH CGA AND FSHR</scope>
    <scope>GLYCOSYLATION AT ASN-25 AND ASN-42</scope>
    <scope>FUNCTION</scope>
    <scope>SUBUNIT</scope>
    <scope>DISULFIDE BONDS</scope>
    <scope>MUTAGENESIS OF THR-78</scope>
</reference>
<reference key="17">
    <citation type="journal article" date="1993" name="Nat. Genet.">
        <title>Primary amenorrhoea and infertility due to a mutation in the beta-subunit of follicle-stimulating hormone.</title>
        <authorList>
            <person name="Matthews C.H."/>
            <person name="Borgato S."/>
            <person name="Beck-Peccoz P."/>
            <person name="Adams M."/>
            <person name="Tone Y."/>
            <person name="Gambino G."/>
            <person name="Casagrande S."/>
            <person name="Tedeschini G."/>
            <person name="Benedetti A."/>
            <person name="Chatterjee V.K.K."/>
        </authorList>
    </citation>
    <scope>INVOLVEMENT IN HH24</scope>
    <scope>FUNCTION</scope>
</reference>
<reference key="18">
    <citation type="journal article" date="1997" name="N. Engl. J. Med.">
        <title>Delayed puberty and hypogonadism caused by mutations in the follicle-stimulating hormone beta-subunit gene.</title>
        <authorList>
            <person name="Layman L.C."/>
            <person name="Lee E.-J."/>
            <person name="Peak D.B."/>
            <person name="Namnoum A.B."/>
            <person name="Vu K.V."/>
            <person name="van Lingen B.L."/>
            <person name="Gray M.R."/>
            <person name="McDonough P.G."/>
            <person name="Reindollar R.H."/>
            <person name="Jameson J.L."/>
        </authorList>
    </citation>
    <scope>VARIANT HH24 GLY-69</scope>
</reference>
<reference key="19">
    <citation type="journal article" date="1997" name="N. Engl. J. Med.">
        <title>Isolated deficiency of follicle-stimulating hormone re-revisited.</title>
        <authorList>
            <person name="Matthews C."/>
            <person name="Chatterjee V.K."/>
        </authorList>
    </citation>
    <scope>INVOLVEMENT IN HH24</scope>
</reference>
<reference key="20">
    <citation type="journal article" date="1999" name="Nat. Genet.">
        <title>Characterization of single-nucleotide polymorphisms in coding regions of human genes.</title>
        <authorList>
            <person name="Cargill M."/>
            <person name="Altshuler D."/>
            <person name="Ireland J."/>
            <person name="Sklar P."/>
            <person name="Ardlie K."/>
            <person name="Patil N."/>
            <person name="Shaw N."/>
            <person name="Lane C.R."/>
            <person name="Lim E.P."/>
            <person name="Kalyanaraman N."/>
            <person name="Nemesh J."/>
            <person name="Ziaugra L."/>
            <person name="Friedland L."/>
            <person name="Rolfe A."/>
            <person name="Warrington J."/>
            <person name="Lipshutz R."/>
            <person name="Daley G.Q."/>
            <person name="Lander E.S."/>
        </authorList>
    </citation>
    <scope>VARIANT ILE-20</scope>
</reference>
<reference key="21">
    <citation type="journal article" date="1999" name="Nat. Genet.">
        <authorList>
            <person name="Cargill M."/>
            <person name="Altshuler D."/>
            <person name="Ireland J."/>
            <person name="Sklar P."/>
            <person name="Ardlie K."/>
            <person name="Patil N."/>
            <person name="Shaw N."/>
            <person name="Lane C.R."/>
            <person name="Lim E.P."/>
            <person name="Kalyanaraman N."/>
            <person name="Nemesh J."/>
            <person name="Ziaugra L."/>
            <person name="Friedland L."/>
            <person name="Rolfe A."/>
            <person name="Warrington J."/>
            <person name="Lipshutz R."/>
            <person name="Daley G.Q."/>
            <person name="Lander E.S."/>
        </authorList>
    </citation>
    <scope>ERRATUM OF PUBMED:10391209</scope>
</reference>
<sequence length="129" mass="14700">MKTLQFFFLFCCWKAICCNSCELTNITIAIEKEECRFCISINTTWCAGYCYTRDLVYKDPARPKIQKTCTFKELVYETVRVPGCAHHADSLYTYPVATQCHCGKCDSDSTDCTVRGLGPSYCSFGEMKE</sequence>
<dbReference type="EMBL" id="M16647">
    <property type="protein sequence ID" value="AAA52476.1"/>
    <property type="molecule type" value="Genomic_DNA"/>
</dbReference>
<dbReference type="EMBL" id="M16646">
    <property type="protein sequence ID" value="AAA52476.1"/>
    <property type="status" value="JOINED"/>
    <property type="molecule type" value="Genomic_DNA"/>
</dbReference>
<dbReference type="EMBL" id="M24540">
    <property type="protein sequence ID" value="AAA52470.1"/>
    <property type="molecule type" value="Genomic_DNA"/>
</dbReference>
<dbReference type="EMBL" id="M24539">
    <property type="protein sequence ID" value="AAA52470.1"/>
    <property type="status" value="JOINED"/>
    <property type="molecule type" value="Genomic_DNA"/>
</dbReference>
<dbReference type="EMBL" id="M54914">
    <property type="protein sequence ID" value="AAB02868.1"/>
    <property type="molecule type" value="Genomic_DNA"/>
</dbReference>
<dbReference type="EMBL" id="M54913">
    <property type="protein sequence ID" value="AAB02868.1"/>
    <property type="status" value="JOINED"/>
    <property type="molecule type" value="Genomic_DNA"/>
</dbReference>
<dbReference type="EMBL" id="EF198021">
    <property type="protein sequence ID" value="ABM88373.1"/>
    <property type="molecule type" value="Genomic_DNA"/>
</dbReference>
<dbReference type="EMBL" id="EF585489">
    <property type="protein sequence ID" value="ABQ57401.1"/>
    <property type="molecule type" value="mRNA"/>
</dbReference>
<dbReference type="EMBL" id="EF585490">
    <property type="protein sequence ID" value="ABQ57402.1"/>
    <property type="molecule type" value="Genomic_DNA"/>
</dbReference>
<dbReference type="EMBL" id="EU081884">
    <property type="protein sequence ID" value="ABU96749.1"/>
    <property type="molecule type" value="Genomic_DNA"/>
</dbReference>
<dbReference type="EMBL" id="EU081885">
    <property type="protein sequence ID" value="ABU96750.1"/>
    <property type="molecule type" value="Genomic_DNA"/>
</dbReference>
<dbReference type="EMBL" id="AL358944">
    <property type="status" value="NOT_ANNOTATED_CDS"/>
    <property type="molecule type" value="Genomic_DNA"/>
</dbReference>
<dbReference type="EMBL" id="CH471064">
    <property type="protein sequence ID" value="EAW68260.1"/>
    <property type="molecule type" value="Genomic_DNA"/>
</dbReference>
<dbReference type="EMBL" id="BC113488">
    <property type="protein sequence ID" value="AAI13489.1"/>
    <property type="molecule type" value="mRNA"/>
</dbReference>
<dbReference type="EMBL" id="BC113490">
    <property type="protein sequence ID" value="AAI13491.1"/>
    <property type="molecule type" value="mRNA"/>
</dbReference>
<dbReference type="CCDS" id="CCDS7868.1"/>
<dbReference type="PIR" id="A40920">
    <property type="entry name" value="FTHUB"/>
</dbReference>
<dbReference type="RefSeq" id="NP_000501.1">
    <property type="nucleotide sequence ID" value="NM_000510.4"/>
</dbReference>
<dbReference type="RefSeq" id="NP_001018090.1">
    <property type="nucleotide sequence ID" value="NM_001018080.3"/>
</dbReference>
<dbReference type="RefSeq" id="NP_001369218.1">
    <property type="nucleotide sequence ID" value="NM_001382289.1"/>
</dbReference>
<dbReference type="PDB" id="1FL7">
    <property type="method" value="X-ray"/>
    <property type="resolution" value="3.00 A"/>
    <property type="chains" value="B/D=19-129"/>
</dbReference>
<dbReference type="PDB" id="1XWD">
    <property type="method" value="X-ray"/>
    <property type="resolution" value="2.92 A"/>
    <property type="chains" value="B/E=19-129"/>
</dbReference>
<dbReference type="PDB" id="4AY9">
    <property type="method" value="X-ray"/>
    <property type="resolution" value="2.50 A"/>
    <property type="chains" value="B/E/H=19-129"/>
</dbReference>
<dbReference type="PDB" id="4MQW">
    <property type="method" value="X-ray"/>
    <property type="resolution" value="2.90 A"/>
    <property type="chains" value="B/E/H=19-129"/>
</dbReference>
<dbReference type="PDB" id="8I2G">
    <property type="method" value="EM"/>
    <property type="resolution" value="2.80 A"/>
    <property type="chains" value="Y=19-127"/>
</dbReference>
<dbReference type="PDBsum" id="1FL7"/>
<dbReference type="PDBsum" id="1XWD"/>
<dbReference type="PDBsum" id="4AY9"/>
<dbReference type="PDBsum" id="4MQW"/>
<dbReference type="PDBsum" id="8I2G"/>
<dbReference type="EMDB" id="EMD-35135"/>
<dbReference type="SMR" id="P01225"/>
<dbReference type="BioGRID" id="108766">
    <property type="interactions" value="1"/>
</dbReference>
<dbReference type="ComplexPortal" id="CPX-665">
    <property type="entry name" value="Follicle-stimulating hormone complex"/>
</dbReference>
<dbReference type="DIP" id="DIP-35604N"/>
<dbReference type="ELM" id="P01225"/>
<dbReference type="FunCoup" id="P01225">
    <property type="interactions" value="635"/>
</dbReference>
<dbReference type="IntAct" id="P01225">
    <property type="interactions" value="3"/>
</dbReference>
<dbReference type="STRING" id="9606.ENSP00000416606"/>
<dbReference type="GlyConnect" id="165">
    <property type="glycosylation" value="10 N-Linked glycans"/>
</dbReference>
<dbReference type="GlyCosmos" id="P01225">
    <property type="glycosylation" value="2 sites, 28 glycans"/>
</dbReference>
<dbReference type="GlyGen" id="P01225">
    <property type="glycosylation" value="3 sites, 28 N-linked glycans (3 sites)"/>
</dbReference>
<dbReference type="iPTMnet" id="P01225"/>
<dbReference type="PhosphoSitePlus" id="P01225"/>
<dbReference type="SwissPalm" id="P01225"/>
<dbReference type="BioMuta" id="FSHB"/>
<dbReference type="DMDM" id="120552"/>
<dbReference type="MassIVE" id="P01225"/>
<dbReference type="PaxDb" id="9606-ENSP00000416606"/>
<dbReference type="PeptideAtlas" id="P01225"/>
<dbReference type="Antibodypedia" id="12775">
    <property type="antibodies" value="1031 antibodies from 39 providers"/>
</dbReference>
<dbReference type="DNASU" id="2488"/>
<dbReference type="Ensembl" id="ENST00000254122.8">
    <property type="protein sequence ID" value="ENSP00000254122.3"/>
    <property type="gene ID" value="ENSG00000131808.11"/>
</dbReference>
<dbReference type="Ensembl" id="ENST00000417547.1">
    <property type="protein sequence ID" value="ENSP00000416606.1"/>
    <property type="gene ID" value="ENSG00000131808.11"/>
</dbReference>
<dbReference type="Ensembl" id="ENST00000533718.2">
    <property type="protein sequence ID" value="ENSP00000433424.1"/>
    <property type="gene ID" value="ENSG00000131808.11"/>
</dbReference>
<dbReference type="GeneID" id="2488"/>
<dbReference type="KEGG" id="hsa:2488"/>
<dbReference type="MANE-Select" id="ENST00000533718.2">
    <property type="protein sequence ID" value="ENSP00000433424.1"/>
    <property type="RefSeq nucleotide sequence ID" value="NM_001382289.1"/>
    <property type="RefSeq protein sequence ID" value="NP_001369218.1"/>
</dbReference>
<dbReference type="UCSC" id="uc001msl.4">
    <property type="organism name" value="human"/>
</dbReference>
<dbReference type="AGR" id="HGNC:3964"/>
<dbReference type="CTD" id="2488"/>
<dbReference type="DisGeNET" id="2488"/>
<dbReference type="GeneCards" id="FSHB"/>
<dbReference type="HGNC" id="HGNC:3964">
    <property type="gene designation" value="FSHB"/>
</dbReference>
<dbReference type="HPA" id="ENSG00000131808">
    <property type="expression patterns" value="Tissue enriched (pituitary)"/>
</dbReference>
<dbReference type="MalaCards" id="FSHB"/>
<dbReference type="MIM" id="136530">
    <property type="type" value="gene"/>
</dbReference>
<dbReference type="MIM" id="229070">
    <property type="type" value="phenotype"/>
</dbReference>
<dbReference type="neXtProt" id="NX_P01225"/>
<dbReference type="OpenTargets" id="ENSG00000131808"/>
<dbReference type="Orphanet" id="52901">
    <property type="disease" value="Isolated follicle stimulating hormone deficiency"/>
</dbReference>
<dbReference type="PharmGKB" id="PA28382"/>
<dbReference type="VEuPathDB" id="HostDB:ENSG00000131808"/>
<dbReference type="eggNOG" id="ENOG502S39C">
    <property type="taxonomic scope" value="Eukaryota"/>
</dbReference>
<dbReference type="GeneTree" id="ENSGT00940000160051"/>
<dbReference type="HOGENOM" id="CLU_126319_3_0_1"/>
<dbReference type="InParanoid" id="P01225"/>
<dbReference type="OMA" id="PVATGCH"/>
<dbReference type="OrthoDB" id="8453657at2759"/>
<dbReference type="PAN-GO" id="P01225">
    <property type="GO annotations" value="4 GO annotations based on evolutionary models"/>
</dbReference>
<dbReference type="PhylomeDB" id="P01225"/>
<dbReference type="TreeFam" id="TF332940"/>
<dbReference type="PathwayCommons" id="P01225"/>
<dbReference type="Reactome" id="R-HSA-209822">
    <property type="pathway name" value="Glycoprotein hormones"/>
</dbReference>
<dbReference type="Reactome" id="R-HSA-375281">
    <property type="pathway name" value="Hormone ligand-binding receptors"/>
</dbReference>
<dbReference type="Reactome" id="R-HSA-418555">
    <property type="pathway name" value="G alpha (s) signalling events"/>
</dbReference>
<dbReference type="SABIO-RK" id="P01225"/>
<dbReference type="SignaLink" id="P01225"/>
<dbReference type="SIGNOR" id="P01225"/>
<dbReference type="BioGRID-ORCS" id="2488">
    <property type="hits" value="6 hits in 1139 CRISPR screens"/>
</dbReference>
<dbReference type="EvolutionaryTrace" id="P01225"/>
<dbReference type="GeneWiki" id="FSHB"/>
<dbReference type="GenomeRNAi" id="2488"/>
<dbReference type="Pharos" id="P01225">
    <property type="development level" value="Tbio"/>
</dbReference>
<dbReference type="PRO" id="PR:P01225"/>
<dbReference type="Proteomes" id="UP000005640">
    <property type="component" value="Chromosome 11"/>
</dbReference>
<dbReference type="RNAct" id="P01225">
    <property type="molecule type" value="protein"/>
</dbReference>
<dbReference type="Bgee" id="ENSG00000131808">
    <property type="expression patterns" value="Expressed in adenohypophysis and 46 other cell types or tissues"/>
</dbReference>
<dbReference type="ExpressionAtlas" id="P01225">
    <property type="expression patterns" value="baseline and differential"/>
</dbReference>
<dbReference type="GO" id="GO:0005737">
    <property type="term" value="C:cytoplasm"/>
    <property type="evidence" value="ECO:0000314"/>
    <property type="project" value="UniProtKB"/>
</dbReference>
<dbReference type="GO" id="GO:0005576">
    <property type="term" value="C:extracellular region"/>
    <property type="evidence" value="ECO:0000304"/>
    <property type="project" value="Reactome"/>
</dbReference>
<dbReference type="GO" id="GO:0005615">
    <property type="term" value="C:extracellular space"/>
    <property type="evidence" value="ECO:0000314"/>
    <property type="project" value="UniProtKB"/>
</dbReference>
<dbReference type="GO" id="GO:0016914">
    <property type="term" value="C:follicle-stimulating hormone complex"/>
    <property type="evidence" value="ECO:0000314"/>
    <property type="project" value="UniProtKB"/>
</dbReference>
<dbReference type="GO" id="GO:0016913">
    <property type="term" value="F:follicle-stimulating hormone activity"/>
    <property type="evidence" value="ECO:0000314"/>
    <property type="project" value="UniProtKB"/>
</dbReference>
<dbReference type="GO" id="GO:0007292">
    <property type="term" value="P:female gamete generation"/>
    <property type="evidence" value="ECO:0000304"/>
    <property type="project" value="ProtInc"/>
</dbReference>
<dbReference type="GO" id="GO:0007565">
    <property type="term" value="P:female pregnancy"/>
    <property type="evidence" value="ECO:0000304"/>
    <property type="project" value="ProtInc"/>
</dbReference>
<dbReference type="GO" id="GO:0042699">
    <property type="term" value="P:follicle-stimulating hormone signaling pathway"/>
    <property type="evidence" value="ECO:0000318"/>
    <property type="project" value="GO_Central"/>
</dbReference>
<dbReference type="GO" id="GO:0007186">
    <property type="term" value="P:G protein-coupled receptor signaling pathway"/>
    <property type="evidence" value="ECO:0000314"/>
    <property type="project" value="UniProtKB"/>
</dbReference>
<dbReference type="GO" id="GO:0045780">
    <property type="term" value="P:positive regulation of bone resorption"/>
    <property type="evidence" value="ECO:0007669"/>
    <property type="project" value="Ensembl"/>
</dbReference>
<dbReference type="GO" id="GO:0030335">
    <property type="term" value="P:positive regulation of cell migration"/>
    <property type="evidence" value="ECO:0000303"/>
    <property type="project" value="BHF-UCL"/>
</dbReference>
<dbReference type="GO" id="GO:0008284">
    <property type="term" value="P:positive regulation of cell population proliferation"/>
    <property type="evidence" value="ECO:0000303"/>
    <property type="project" value="BHF-UCL"/>
</dbReference>
<dbReference type="GO" id="GO:0010628">
    <property type="term" value="P:positive regulation of gene expression"/>
    <property type="evidence" value="ECO:0007669"/>
    <property type="project" value="Ensembl"/>
</dbReference>
<dbReference type="GO" id="GO:0010893">
    <property type="term" value="P:positive regulation of steroid biosynthetic process"/>
    <property type="evidence" value="ECO:0000314"/>
    <property type="project" value="UniProtKB"/>
</dbReference>
<dbReference type="GO" id="GO:0045944">
    <property type="term" value="P:positive regulation of transcription by RNA polymerase II"/>
    <property type="evidence" value="ECO:0000303"/>
    <property type="project" value="BHF-UCL"/>
</dbReference>
<dbReference type="GO" id="GO:0006701">
    <property type="term" value="P:progesterone biosynthetic process"/>
    <property type="evidence" value="ECO:0000304"/>
    <property type="project" value="BHF-UCL"/>
</dbReference>
<dbReference type="GO" id="GO:0045670">
    <property type="term" value="P:regulation of osteoclast differentiation"/>
    <property type="evidence" value="ECO:0007669"/>
    <property type="project" value="Ensembl"/>
</dbReference>
<dbReference type="GO" id="GO:0010469">
    <property type="term" value="P:regulation of signaling receptor activity"/>
    <property type="evidence" value="ECO:0000314"/>
    <property type="project" value="UniProtKB"/>
</dbReference>
<dbReference type="GO" id="GO:0060011">
    <property type="term" value="P:Sertoli cell proliferation"/>
    <property type="evidence" value="ECO:0007669"/>
    <property type="project" value="Ensembl"/>
</dbReference>
<dbReference type="GO" id="GO:0007283">
    <property type="term" value="P:spermatogenesis"/>
    <property type="evidence" value="ECO:0007669"/>
    <property type="project" value="Ensembl"/>
</dbReference>
<dbReference type="GO" id="GO:0007179">
    <property type="term" value="P:transforming growth factor beta receptor signaling pathway"/>
    <property type="evidence" value="ECO:0000270"/>
    <property type="project" value="BHF-UCL"/>
</dbReference>
<dbReference type="CDD" id="cd00069">
    <property type="entry name" value="GHB_like"/>
    <property type="match status" value="1"/>
</dbReference>
<dbReference type="FunFam" id="2.10.90.10:FF:000007">
    <property type="entry name" value="Luteinizing hormone beta subunit"/>
    <property type="match status" value="1"/>
</dbReference>
<dbReference type="Gene3D" id="2.10.90.10">
    <property type="entry name" value="Cystine-knot cytokines"/>
    <property type="match status" value="1"/>
</dbReference>
<dbReference type="InterPro" id="IPR029034">
    <property type="entry name" value="Cystine-knot_cytokine"/>
</dbReference>
<dbReference type="InterPro" id="IPR006208">
    <property type="entry name" value="Glyco_hormone_CN"/>
</dbReference>
<dbReference type="InterPro" id="IPR001545">
    <property type="entry name" value="Gonadotropin_bsu"/>
</dbReference>
<dbReference type="InterPro" id="IPR018245">
    <property type="entry name" value="Gonadotropin_bsu_CS"/>
</dbReference>
<dbReference type="PANTHER" id="PTHR11515:SF17">
    <property type="entry name" value="FOLLITROPIN SUBUNIT BETA"/>
    <property type="match status" value="1"/>
</dbReference>
<dbReference type="PANTHER" id="PTHR11515">
    <property type="entry name" value="GLYCOPROTEIN HORMONE BETA CHAIN"/>
    <property type="match status" value="1"/>
</dbReference>
<dbReference type="Pfam" id="PF00007">
    <property type="entry name" value="Cys_knot"/>
    <property type="match status" value="1"/>
</dbReference>
<dbReference type="SMART" id="SM00068">
    <property type="entry name" value="GHB"/>
    <property type="match status" value="1"/>
</dbReference>
<dbReference type="SUPFAM" id="SSF57501">
    <property type="entry name" value="Cystine-knot cytokines"/>
    <property type="match status" value="1"/>
</dbReference>
<dbReference type="PROSITE" id="PS00261">
    <property type="entry name" value="GLYCO_HORMONE_BETA_1"/>
    <property type="match status" value="1"/>
</dbReference>
<dbReference type="PROSITE" id="PS00689">
    <property type="entry name" value="GLYCO_HORMONE_BETA_2"/>
    <property type="match status" value="1"/>
</dbReference>
<protein>
    <recommendedName>
        <fullName>Follitropin subunit beta</fullName>
    </recommendedName>
    <alternativeName>
        <fullName>Follicle-stimulating hormone beta subunit</fullName>
        <shortName>FSH-B</shortName>
        <shortName>FSH-beta</shortName>
    </alternativeName>
    <alternativeName>
        <fullName>Follitropin beta chain</fullName>
    </alternativeName>
</protein>
<name>FSHB_HUMAN</name>
<gene>
    <name type="primary">FSHB</name>
</gene>
<comment type="function">
    <text evidence="3 4 6 8">Together with the alpha chain CGA constitutes follitropin, the follicle-stimulating hormone, and provides its biological specificity to the hormone heterodimer. Binds FSHR, a G protein-coupled receptor, on target cells to activate downstream signaling pathways (PubMed:24692546, PubMed:2494176). Follitropin is involved in follicle development and spermatogenesis in reproductive organs (PubMed:407105, PubMed:8220432).</text>
</comment>
<comment type="subunit">
    <text evidence="2 3 4">Heterodimer. The active follitropin is a heterodimer composed of an alpha chain/CGA shared with other hormones and a unique beta chain/FSHB shown here.</text>
</comment>
<comment type="interaction">
    <interactant intactId="EBI-1030645">
        <id>P01225</id>
    </interactant>
    <interactant intactId="EBI-718913">
        <id>P01215</id>
        <label>CGA</label>
    </interactant>
    <organismsDiffer>false</organismsDiffer>
    <experiments>4</experiments>
</comment>
<comment type="subcellular location">
    <subcellularLocation>
        <location evidence="4">Secreted</location>
    </subcellularLocation>
    <text evidence="4">Efficient secretion requires dimerization with CGA.</text>
</comment>
<comment type="disease" evidence="8 9 10">
    <disease id="DI-01840">
        <name>Hypogonadotropic hypogonadism 24 with or without anosmia</name>
        <acronym>HH24</acronym>
        <description>A form of hypogonadotropic hypogonadism, a group of disorders characterized by absent or incomplete sexual maturation by the age of 18 years, in conjunction with low levels of circulating gonadotropins and testosterone and no other abnormalities of the hypothalamic-pituitary axis. HH24 is characterized by primary amenorrhea in women, oligo or azoospermia with low to normal testosterone levels in men, and infertility.</description>
        <dbReference type="MIM" id="229070"/>
    </disease>
    <text>The disease is caused by variants affecting the gene represented in this entry.</text>
</comment>
<comment type="pharmaceutical">
    <text>Available under the names Gonal-F or Metrodin HP (Serono) and Puregon (Organon). Used in the treatment of infertility in women with proven hypopituitarism or who have not responded to clomifene; or in superovulation treatment for assisted conception (such as in vitro fertilization). Metrodin HP is also used in the treatment of hypogonadotrophic hypogonadism in men for the stimulation of spermatogenesis.</text>
</comment>
<comment type="similarity">
    <text evidence="11">Belongs to the glycoprotein hormones subunit beta family.</text>
</comment>
<comment type="online information" name="Wikipedia">
    <link uri="https://en.wikipedia.org/wiki/Follicle_stimulating_hormone"/>
    <text>Follicle-stimulating hormone entry</text>
</comment>
<evidence type="ECO:0000269" key="1">
    <source>
    </source>
</evidence>
<evidence type="ECO:0000269" key="2">
    <source>
    </source>
</evidence>
<evidence type="ECO:0000269" key="3">
    <source>
    </source>
</evidence>
<evidence type="ECO:0000269" key="4">
    <source>
    </source>
</evidence>
<evidence type="ECO:0000269" key="5">
    <source>
    </source>
</evidence>
<evidence type="ECO:0000269" key="6">
    <source>
    </source>
</evidence>
<evidence type="ECO:0000269" key="7">
    <source>
    </source>
</evidence>
<evidence type="ECO:0000269" key="8">
    <source>
    </source>
</evidence>
<evidence type="ECO:0000269" key="9">
    <source>
    </source>
</evidence>
<evidence type="ECO:0000269" key="10">
    <source>
    </source>
</evidence>
<evidence type="ECO:0000305" key="11"/>
<evidence type="ECO:0007744" key="12">
    <source>
        <dbReference type="PDB" id="4MQW"/>
    </source>
</evidence>
<evidence type="ECO:0007829" key="13">
    <source>
        <dbReference type="PDB" id="4AY9"/>
    </source>
</evidence>
<evidence type="ECO:0007829" key="14">
    <source>
        <dbReference type="PDB" id="4MQW"/>
    </source>
</evidence>